<dbReference type="EMBL" id="AE010299">
    <property type="protein sequence ID" value="AAM03564.1"/>
    <property type="molecule type" value="Genomic_DNA"/>
</dbReference>
<dbReference type="RefSeq" id="WP_011020169.1">
    <property type="nucleotide sequence ID" value="NC_003552.1"/>
</dbReference>
<dbReference type="SMR" id="Q8TUF7"/>
<dbReference type="FunCoup" id="Q8TUF7">
    <property type="interactions" value="167"/>
</dbReference>
<dbReference type="STRING" id="188937.MA_0110"/>
<dbReference type="EnsemblBacteria" id="AAM03564">
    <property type="protein sequence ID" value="AAM03564"/>
    <property type="gene ID" value="MA_0110"/>
</dbReference>
<dbReference type="GeneID" id="1472002"/>
<dbReference type="KEGG" id="mac:MA_0110"/>
<dbReference type="HOGENOM" id="CLU_043978_1_1_2"/>
<dbReference type="InParanoid" id="Q8TUF7"/>
<dbReference type="OrthoDB" id="14749at2157"/>
<dbReference type="PhylomeDB" id="Q8TUF7"/>
<dbReference type="Proteomes" id="UP000002487">
    <property type="component" value="Chromosome"/>
</dbReference>
<dbReference type="GO" id="GO:0003677">
    <property type="term" value="F:DNA binding"/>
    <property type="evidence" value="ECO:0007669"/>
    <property type="project" value="UniProtKB-UniRule"/>
</dbReference>
<dbReference type="GO" id="GO:0030337">
    <property type="term" value="F:DNA polymerase processivity factor activity"/>
    <property type="evidence" value="ECO:0000318"/>
    <property type="project" value="GO_Central"/>
</dbReference>
<dbReference type="GO" id="GO:0006272">
    <property type="term" value="P:leading strand elongation"/>
    <property type="evidence" value="ECO:0000318"/>
    <property type="project" value="GO_Central"/>
</dbReference>
<dbReference type="GO" id="GO:0006275">
    <property type="term" value="P:regulation of DNA replication"/>
    <property type="evidence" value="ECO:0007669"/>
    <property type="project" value="UniProtKB-UniRule"/>
</dbReference>
<dbReference type="CDD" id="cd00577">
    <property type="entry name" value="PCNA"/>
    <property type="match status" value="1"/>
</dbReference>
<dbReference type="FunFam" id="3.70.10.10:FF:000015">
    <property type="entry name" value="DNA polymerase sliding clamp"/>
    <property type="match status" value="1"/>
</dbReference>
<dbReference type="Gene3D" id="3.70.10.10">
    <property type="match status" value="1"/>
</dbReference>
<dbReference type="HAMAP" id="MF_00317">
    <property type="entry name" value="DNApol_clamp_arch"/>
    <property type="match status" value="1"/>
</dbReference>
<dbReference type="InterPro" id="IPR046938">
    <property type="entry name" value="DNA_clamp_sf"/>
</dbReference>
<dbReference type="InterPro" id="IPR000730">
    <property type="entry name" value="Pr_cel_nuc_antig"/>
</dbReference>
<dbReference type="InterPro" id="IPR022649">
    <property type="entry name" value="Pr_cel_nuc_antig_C"/>
</dbReference>
<dbReference type="InterPro" id="IPR022659">
    <property type="entry name" value="Pr_cel_nuc_antig_CS"/>
</dbReference>
<dbReference type="InterPro" id="IPR022648">
    <property type="entry name" value="Pr_cel_nuc_antig_N"/>
</dbReference>
<dbReference type="NCBIfam" id="NF002222">
    <property type="entry name" value="PRK01115.1-5"/>
    <property type="match status" value="1"/>
</dbReference>
<dbReference type="PANTHER" id="PTHR11352">
    <property type="entry name" value="PROLIFERATING CELL NUCLEAR ANTIGEN"/>
    <property type="match status" value="1"/>
</dbReference>
<dbReference type="PANTHER" id="PTHR11352:SF0">
    <property type="entry name" value="PROLIFERATING CELL NUCLEAR ANTIGEN"/>
    <property type="match status" value="1"/>
</dbReference>
<dbReference type="Pfam" id="PF02747">
    <property type="entry name" value="PCNA_C"/>
    <property type="match status" value="1"/>
</dbReference>
<dbReference type="Pfam" id="PF00705">
    <property type="entry name" value="PCNA_N"/>
    <property type="match status" value="1"/>
</dbReference>
<dbReference type="PRINTS" id="PR00339">
    <property type="entry name" value="PCNACYCLIN"/>
</dbReference>
<dbReference type="SUPFAM" id="SSF55979">
    <property type="entry name" value="DNA clamp"/>
    <property type="match status" value="2"/>
</dbReference>
<dbReference type="PROSITE" id="PS01251">
    <property type="entry name" value="PCNA_1"/>
    <property type="match status" value="1"/>
</dbReference>
<reference key="1">
    <citation type="journal article" date="2002" name="Genome Res.">
        <title>The genome of Methanosarcina acetivorans reveals extensive metabolic and physiological diversity.</title>
        <authorList>
            <person name="Galagan J.E."/>
            <person name="Nusbaum C."/>
            <person name="Roy A."/>
            <person name="Endrizzi M.G."/>
            <person name="Macdonald P."/>
            <person name="FitzHugh W."/>
            <person name="Calvo S."/>
            <person name="Engels R."/>
            <person name="Smirnov S."/>
            <person name="Atnoor D."/>
            <person name="Brown A."/>
            <person name="Allen N."/>
            <person name="Naylor J."/>
            <person name="Stange-Thomann N."/>
            <person name="DeArellano K."/>
            <person name="Johnson R."/>
            <person name="Linton L."/>
            <person name="McEwan P."/>
            <person name="McKernan K."/>
            <person name="Talamas J."/>
            <person name="Tirrell A."/>
            <person name="Ye W."/>
            <person name="Zimmer A."/>
            <person name="Barber R.D."/>
            <person name="Cann I."/>
            <person name="Graham D.E."/>
            <person name="Grahame D.A."/>
            <person name="Guss A.M."/>
            <person name="Hedderich R."/>
            <person name="Ingram-Smith C."/>
            <person name="Kuettner H.C."/>
            <person name="Krzycki J.A."/>
            <person name="Leigh J.A."/>
            <person name="Li W."/>
            <person name="Liu J."/>
            <person name="Mukhopadhyay B."/>
            <person name="Reeve J.N."/>
            <person name="Smith K."/>
            <person name="Springer T.A."/>
            <person name="Umayam L.A."/>
            <person name="White O."/>
            <person name="White R.H."/>
            <person name="de Macario E.C."/>
            <person name="Ferry J.G."/>
            <person name="Jarrell K.F."/>
            <person name="Jing H."/>
            <person name="Macario A.J.L."/>
            <person name="Paulsen I.T."/>
            <person name="Pritchett M."/>
            <person name="Sowers K.R."/>
            <person name="Swanson R.V."/>
            <person name="Zinder S.H."/>
            <person name="Lander E."/>
            <person name="Metcalf W.W."/>
            <person name="Birren B."/>
        </authorList>
    </citation>
    <scope>NUCLEOTIDE SEQUENCE [LARGE SCALE GENOMIC DNA]</scope>
    <source>
        <strain>ATCC 35395 / DSM 2834 / JCM 12185 / C2A</strain>
    </source>
</reference>
<evidence type="ECO:0000255" key="1">
    <source>
        <dbReference type="HAMAP-Rule" id="MF_00317"/>
    </source>
</evidence>
<accession>Q8TUF7</accession>
<keyword id="KW-0235">DNA replication</keyword>
<keyword id="KW-0238">DNA-binding</keyword>
<keyword id="KW-1185">Reference proteome</keyword>
<name>PCNA_METAC</name>
<sequence>MFKAAINAELLKDAIAALAVIVDEVRFKIKPEGISVKAVDPANVAMGIFELGSSAFDEYSADECEIGLDLNKITDLLGIADRNDTVRMGLEEGSNKLLIDVGGLSYTLSLLDPSTIRAEPRVPQLELPAKVVLNGADLRRAVKAAEKISDHMLMGVSGDTFYMEAKGDTDQVRLEMGRDQLIDLKAGEACSLFSLDYLTDIVKPTNKVNEVTLSLGRDFPILIDFEIANGAGRISYLLAPRIESD</sequence>
<gene>
    <name evidence="1" type="primary">pcn</name>
    <name type="synonym">pcnA</name>
    <name type="ordered locus">MA_0110</name>
</gene>
<protein>
    <recommendedName>
        <fullName evidence="1">DNA polymerase sliding clamp</fullName>
    </recommendedName>
    <alternativeName>
        <fullName evidence="1">Proliferating cell nuclear antigen homolog</fullName>
        <shortName evidence="1">PCNA</shortName>
    </alternativeName>
</protein>
<organism>
    <name type="scientific">Methanosarcina acetivorans (strain ATCC 35395 / DSM 2834 / JCM 12185 / C2A)</name>
    <dbReference type="NCBI Taxonomy" id="188937"/>
    <lineage>
        <taxon>Archaea</taxon>
        <taxon>Methanobacteriati</taxon>
        <taxon>Methanobacteriota</taxon>
        <taxon>Stenosarchaea group</taxon>
        <taxon>Methanomicrobia</taxon>
        <taxon>Methanosarcinales</taxon>
        <taxon>Methanosarcinaceae</taxon>
        <taxon>Methanosarcina</taxon>
    </lineage>
</organism>
<proteinExistence type="inferred from homology"/>
<feature type="chain" id="PRO_0000149195" description="DNA polymerase sliding clamp">
    <location>
        <begin position="1"/>
        <end position="245"/>
    </location>
</feature>
<comment type="function">
    <text evidence="1">Sliding clamp subunit that acts as a moving platform for DNA processing. Responsible for tethering the catalytic subunit of DNA polymerase and other proteins to DNA during high-speed replication.</text>
</comment>
<comment type="subunit">
    <text evidence="1">Homotrimer. The subunits circularize to form a toroid; DNA passes through its center. Replication factor C (RFC) is required to load the toroid on the DNA.</text>
</comment>
<comment type="similarity">
    <text evidence="1">Belongs to the PCNA family.</text>
</comment>